<protein>
    <recommendedName>
        <fullName evidence="1">Type 2 DNA topoisomerase 6 subunit B</fullName>
        <ecNumber evidence="1">5.6.2.2</ecNumber>
    </recommendedName>
    <alternativeName>
        <fullName evidence="1">Type II DNA topoisomerase VI subunit B</fullName>
        <shortName evidence="1">TopoVI-B</shortName>
    </alternativeName>
</protein>
<organism>
    <name type="scientific">Archaeoglobus fulgidus (strain ATCC 49558 / DSM 4304 / JCM 9628 / NBRC 100126 / VC-16)</name>
    <dbReference type="NCBI Taxonomy" id="224325"/>
    <lineage>
        <taxon>Archaea</taxon>
        <taxon>Methanobacteriati</taxon>
        <taxon>Methanobacteriota</taxon>
        <taxon>Archaeoglobi</taxon>
        <taxon>Archaeoglobales</taxon>
        <taxon>Archaeoglobaceae</taxon>
        <taxon>Archaeoglobus</taxon>
    </lineage>
</organism>
<reference key="1">
    <citation type="journal article" date="1997" name="Nature">
        <title>The complete genome sequence of the hyperthermophilic, sulphate-reducing archaeon Archaeoglobus fulgidus.</title>
        <authorList>
            <person name="Klenk H.-P."/>
            <person name="Clayton R.A."/>
            <person name="Tomb J.-F."/>
            <person name="White O."/>
            <person name="Nelson K.E."/>
            <person name="Ketchum K.A."/>
            <person name="Dodson R.J."/>
            <person name="Gwinn M.L."/>
            <person name="Hickey E.K."/>
            <person name="Peterson J.D."/>
            <person name="Richardson D.L."/>
            <person name="Kerlavage A.R."/>
            <person name="Graham D.E."/>
            <person name="Kyrpides N.C."/>
            <person name="Fleischmann R.D."/>
            <person name="Quackenbush J."/>
            <person name="Lee N.H."/>
            <person name="Sutton G.G."/>
            <person name="Gill S.R."/>
            <person name="Kirkness E.F."/>
            <person name="Dougherty B.A."/>
            <person name="McKenney K."/>
            <person name="Adams M.D."/>
            <person name="Loftus B.J."/>
            <person name="Peterson S.N."/>
            <person name="Reich C.I."/>
            <person name="McNeil L.K."/>
            <person name="Badger J.H."/>
            <person name="Glodek A."/>
            <person name="Zhou L."/>
            <person name="Overbeek R."/>
            <person name="Gocayne J.D."/>
            <person name="Weidman J.F."/>
            <person name="McDonald L.A."/>
            <person name="Utterback T.R."/>
            <person name="Cotton M.D."/>
            <person name="Spriggs T."/>
            <person name="Artiach P."/>
            <person name="Kaine B.P."/>
            <person name="Sykes S.M."/>
            <person name="Sadow P.W."/>
            <person name="D'Andrea K.P."/>
            <person name="Bowman C."/>
            <person name="Fujii C."/>
            <person name="Garland S.A."/>
            <person name="Mason T.M."/>
            <person name="Olsen G.J."/>
            <person name="Fraser C.M."/>
            <person name="Smith H.O."/>
            <person name="Woese C.R."/>
            <person name="Venter J.C."/>
        </authorList>
    </citation>
    <scope>NUCLEOTIDE SEQUENCE [LARGE SCALE GENOMIC DNA]</scope>
    <source>
        <strain>ATCC 49558 / DSM 4304 / JCM 9628 / NBRC 100126 / VC-16</strain>
    </source>
</reference>
<accession>O29605</accession>
<keyword id="KW-0067">ATP-binding</keyword>
<keyword id="KW-0238">DNA-binding</keyword>
<keyword id="KW-0413">Isomerase</keyword>
<keyword id="KW-0547">Nucleotide-binding</keyword>
<keyword id="KW-1185">Reference proteome</keyword>
<keyword id="KW-0799">Topoisomerase</keyword>
<dbReference type="EC" id="5.6.2.2" evidence="1"/>
<dbReference type="EMBL" id="AE000782">
    <property type="protein sequence ID" value="AAB90588.1"/>
    <property type="molecule type" value="Genomic_DNA"/>
</dbReference>
<dbReference type="PIR" id="D69331">
    <property type="entry name" value="D69331"/>
</dbReference>
<dbReference type="RefSeq" id="WP_010878155.1">
    <property type="nucleotide sequence ID" value="NC_000917.1"/>
</dbReference>
<dbReference type="SMR" id="O29605"/>
<dbReference type="STRING" id="224325.AF_0652"/>
<dbReference type="PaxDb" id="224325-AF_0652"/>
<dbReference type="EnsemblBacteria" id="AAB90588">
    <property type="protein sequence ID" value="AAB90588"/>
    <property type="gene ID" value="AF_0652"/>
</dbReference>
<dbReference type="GeneID" id="24794252"/>
<dbReference type="KEGG" id="afu:AF_0652"/>
<dbReference type="eggNOG" id="arCOG01165">
    <property type="taxonomic scope" value="Archaea"/>
</dbReference>
<dbReference type="HOGENOM" id="CLU_006403_0_0_2"/>
<dbReference type="OrthoDB" id="65493at2157"/>
<dbReference type="PhylomeDB" id="O29605"/>
<dbReference type="Proteomes" id="UP000002199">
    <property type="component" value="Chromosome"/>
</dbReference>
<dbReference type="GO" id="GO:0005524">
    <property type="term" value="F:ATP binding"/>
    <property type="evidence" value="ECO:0007669"/>
    <property type="project" value="UniProtKB-UniRule"/>
</dbReference>
<dbReference type="GO" id="GO:0003677">
    <property type="term" value="F:DNA binding"/>
    <property type="evidence" value="ECO:0007669"/>
    <property type="project" value="UniProtKB-UniRule"/>
</dbReference>
<dbReference type="GO" id="GO:0003918">
    <property type="term" value="F:DNA topoisomerase type II (double strand cut, ATP-hydrolyzing) activity"/>
    <property type="evidence" value="ECO:0007669"/>
    <property type="project" value="UniProtKB-UniRule"/>
</dbReference>
<dbReference type="GO" id="GO:0006265">
    <property type="term" value="P:DNA topological change"/>
    <property type="evidence" value="ECO:0007669"/>
    <property type="project" value="UniProtKB-UniRule"/>
</dbReference>
<dbReference type="CDD" id="cd16933">
    <property type="entry name" value="HATPase_TopVIB-like"/>
    <property type="match status" value="1"/>
</dbReference>
<dbReference type="CDD" id="cd00823">
    <property type="entry name" value="TopoIIB_Trans"/>
    <property type="match status" value="1"/>
</dbReference>
<dbReference type="FunFam" id="3.30.565.10:FF:000062">
    <property type="entry name" value="Type 2 DNA topoisomerase 6 subunit B"/>
    <property type="match status" value="1"/>
</dbReference>
<dbReference type="Gene3D" id="1.10.8.50">
    <property type="match status" value="1"/>
</dbReference>
<dbReference type="Gene3D" id="2.60.40.2960">
    <property type="match status" value="1"/>
</dbReference>
<dbReference type="Gene3D" id="3.30.230.10">
    <property type="match status" value="1"/>
</dbReference>
<dbReference type="Gene3D" id="6.10.20.80">
    <property type="match status" value="1"/>
</dbReference>
<dbReference type="Gene3D" id="3.30.565.10">
    <property type="entry name" value="Histidine kinase-like ATPase, C-terminal domain"/>
    <property type="match status" value="1"/>
</dbReference>
<dbReference type="HAMAP" id="MF_00322">
    <property type="entry name" value="Top6B"/>
    <property type="match status" value="1"/>
</dbReference>
<dbReference type="InterPro" id="IPR036890">
    <property type="entry name" value="HATPase_C_sf"/>
</dbReference>
<dbReference type="InterPro" id="IPR020568">
    <property type="entry name" value="Ribosomal_Su5_D2-typ_SF"/>
</dbReference>
<dbReference type="InterPro" id="IPR010979">
    <property type="entry name" value="Ribosomal_uS13-like_H2TH"/>
</dbReference>
<dbReference type="InterPro" id="IPR014721">
    <property type="entry name" value="Ribsml_uS5_D2-typ_fold_subgr"/>
</dbReference>
<dbReference type="InterPro" id="IPR040494">
    <property type="entry name" value="Top6b_C"/>
</dbReference>
<dbReference type="InterPro" id="IPR005734">
    <property type="entry name" value="TopoVI_B"/>
</dbReference>
<dbReference type="InterPro" id="IPR015320">
    <property type="entry name" value="TopoVI_B_transducer"/>
</dbReference>
<dbReference type="NCBIfam" id="NF003218">
    <property type="entry name" value="PRK04184.1"/>
    <property type="match status" value="1"/>
</dbReference>
<dbReference type="NCBIfam" id="TIGR01052">
    <property type="entry name" value="top6b"/>
    <property type="match status" value="1"/>
</dbReference>
<dbReference type="PANTHER" id="PTHR48444">
    <property type="entry name" value="DNA TOPOISOMERASE 6 SUBUNIT B"/>
    <property type="match status" value="1"/>
</dbReference>
<dbReference type="PANTHER" id="PTHR48444:SF1">
    <property type="entry name" value="DNA TOPOISOMERASE 6 SUBUNIT B"/>
    <property type="match status" value="1"/>
</dbReference>
<dbReference type="Pfam" id="PF02518">
    <property type="entry name" value="HATPase_c"/>
    <property type="match status" value="1"/>
</dbReference>
<dbReference type="Pfam" id="PF18000">
    <property type="entry name" value="Top6b_C"/>
    <property type="match status" value="1"/>
</dbReference>
<dbReference type="Pfam" id="PF09239">
    <property type="entry name" value="Topo-VIb_trans"/>
    <property type="match status" value="1"/>
</dbReference>
<dbReference type="PIRSF" id="PIRSF006553">
    <property type="entry name" value="TopoVI_B"/>
    <property type="match status" value="1"/>
</dbReference>
<dbReference type="SMART" id="SM00387">
    <property type="entry name" value="HATPase_c"/>
    <property type="match status" value="1"/>
</dbReference>
<dbReference type="SUPFAM" id="SSF55874">
    <property type="entry name" value="ATPase domain of HSP90 chaperone/DNA topoisomerase II/histidine kinase"/>
    <property type="match status" value="1"/>
</dbReference>
<dbReference type="SUPFAM" id="SSF54211">
    <property type="entry name" value="Ribosomal protein S5 domain 2-like"/>
    <property type="match status" value="1"/>
</dbReference>
<dbReference type="SUPFAM" id="SSF46946">
    <property type="entry name" value="S13-like H2TH domain"/>
    <property type="match status" value="1"/>
</dbReference>
<feature type="chain" id="PRO_0000145459" description="Type 2 DNA topoisomerase 6 subunit B">
    <location>
        <begin position="1"/>
        <end position="602"/>
    </location>
</feature>
<feature type="binding site" evidence="1">
    <location>
        <position position="40"/>
    </location>
    <ligand>
        <name>ATP</name>
        <dbReference type="ChEBI" id="CHEBI:30616"/>
    </ligand>
</feature>
<feature type="binding site" evidence="1">
    <location>
        <position position="71"/>
    </location>
    <ligand>
        <name>ATP</name>
        <dbReference type="ChEBI" id="CHEBI:30616"/>
    </ligand>
</feature>
<feature type="binding site" evidence="1">
    <location>
        <begin position="92"/>
        <end position="93"/>
    </location>
    <ligand>
        <name>ATP</name>
        <dbReference type="ChEBI" id="CHEBI:30616"/>
    </ligand>
</feature>
<feature type="binding site" evidence="1">
    <location>
        <begin position="102"/>
        <end position="109"/>
    </location>
    <ligand>
        <name>ATP</name>
        <dbReference type="ChEBI" id="CHEBI:30616"/>
    </ligand>
</feature>
<feature type="binding site" evidence="1">
    <location>
        <position position="425"/>
    </location>
    <ligand>
        <name>ATP</name>
        <dbReference type="ChEBI" id="CHEBI:30616"/>
    </ligand>
</feature>
<name>TOP6B_ARCFU</name>
<proteinExistence type="inferred from homology"/>
<sequence length="602" mass="67400">MSGKHREISVAEFFEKNKHILGYSNPAKAIITVVKEAVDNALDACEEAGILPDIFVRISKVDDHFKIVVEDNGPGIPREQIPKVFGKLLYGSRFHEIRQSRGQQGIGISAAVLYAQLTTGKPATVISKTPDEDRAKKVVLYINTKKNEPEIVEEGEEEWYLPSGTKIELEVAGNYVRERKQSVYEYLRETSVINPHAKITFVEPDGTINEFKRVTDDIPQPPKSIKPHPHGIELGTLMSMLKSTRATTLRRFLKEEFVRVGEKIADDVLRKAGFSGDETPQEMGRDDAAKLLNAFRQTDFLPPPTDCLSPIGEAMIAKSLMAEFQPEFVYAVTRKPKVYSGHPFLVEVGLAYGGEIKSEKVTLLRYANKIPLLYQQGGCALTKAVESVNWKSYGMVQNRGELPSAPAVILIHLASTNIPYTSESKESVAAIPEIIDETRLALQEVGRRLKEYLERKSRQQKKKKKEEMIGKVLPLIAKKVCEILEKEPLEIDRIVARIMGYLHVERIVEERDGVKVVTIRVSNFTRSKKSIKLYEMCSGNVEADGAKVSGSGYSTVTWSLEVKPDEEVEVSYRLKGRIINKNPLVEGVEEDLLSGAEVMNFA</sequence>
<evidence type="ECO:0000255" key="1">
    <source>
        <dbReference type="HAMAP-Rule" id="MF_00322"/>
    </source>
</evidence>
<gene>
    <name evidence="1" type="primary">top6B</name>
    <name type="ordered locus">AF_0652</name>
</gene>
<comment type="function">
    <text evidence="1">Relaxes both positive and negative superturns and exhibits a strong decatenase activity.</text>
</comment>
<comment type="catalytic activity">
    <reaction evidence="1">
        <text>ATP-dependent breakage, passage and rejoining of double-stranded DNA.</text>
        <dbReference type="EC" id="5.6.2.2"/>
    </reaction>
</comment>
<comment type="subunit">
    <text evidence="1">Homodimer. Heterotetramer of two Top6A and two Top6B chains.</text>
</comment>
<comment type="similarity">
    <text evidence="1">Belongs to the TOP6B family.</text>
</comment>